<organism>
    <name type="scientific">Mycobacterium tuberculosis (strain ATCC 25618 / H37Rv)</name>
    <dbReference type="NCBI Taxonomy" id="83332"/>
    <lineage>
        <taxon>Bacteria</taxon>
        <taxon>Bacillati</taxon>
        <taxon>Actinomycetota</taxon>
        <taxon>Actinomycetes</taxon>
        <taxon>Mycobacteriales</taxon>
        <taxon>Mycobacteriaceae</taxon>
        <taxon>Mycobacterium</taxon>
        <taxon>Mycobacterium tuberculosis complex</taxon>
    </lineage>
</organism>
<protein>
    <recommendedName>
        <fullName>Decaprenyl diphosphate synthase</fullName>
        <shortName>DecaPP</shortName>
        <ecNumber>2.5.1.86</ecNumber>
        <ecNumber>2.5.1.87</ecNumber>
    </recommendedName>
    <alternativeName>
        <fullName>Decaprenyl pyrophosphate synthase</fullName>
    </alternativeName>
    <alternativeName>
        <fullName>Long-chain isoprenyl diphosphate synthase</fullName>
    </alternativeName>
    <alternativeName>
        <fullName>Trans,polycis-decaprenyl diphosphate synthase</fullName>
    </alternativeName>
</protein>
<dbReference type="EC" id="2.5.1.86"/>
<dbReference type="EC" id="2.5.1.87"/>
<dbReference type="EMBL" id="AL123456">
    <property type="protein sequence ID" value="CCP45149.1"/>
    <property type="molecule type" value="Genomic_DNA"/>
</dbReference>
<dbReference type="PIR" id="H70585">
    <property type="entry name" value="H70585"/>
</dbReference>
<dbReference type="RefSeq" id="NP_216877.1">
    <property type="nucleotide sequence ID" value="NC_000962.3"/>
</dbReference>
<dbReference type="RefSeq" id="WP_003412212.1">
    <property type="nucleotide sequence ID" value="NZ_NVQJ01000029.1"/>
</dbReference>
<dbReference type="PDB" id="2VG2">
    <property type="method" value="X-ray"/>
    <property type="resolution" value="1.95 A"/>
    <property type="chains" value="A/B/C/D=13-296"/>
</dbReference>
<dbReference type="PDB" id="2VG3">
    <property type="method" value="X-ray"/>
    <property type="resolution" value="1.80 A"/>
    <property type="chains" value="A/B/C/D=13-296"/>
</dbReference>
<dbReference type="PDB" id="2VG4">
    <property type="method" value="X-ray"/>
    <property type="resolution" value="2.60 A"/>
    <property type="chains" value="A/B/C/D=13-296"/>
</dbReference>
<dbReference type="PDB" id="4ONC">
    <property type="method" value="X-ray"/>
    <property type="resolution" value="1.83 A"/>
    <property type="chains" value="A/B=13-296"/>
</dbReference>
<dbReference type="PDB" id="6IME">
    <property type="method" value="X-ray"/>
    <property type="resolution" value="1.55 A"/>
    <property type="chains" value="A/B=1-296"/>
</dbReference>
<dbReference type="PDBsum" id="2VG2"/>
<dbReference type="PDBsum" id="2VG3"/>
<dbReference type="PDBsum" id="2VG4"/>
<dbReference type="PDBsum" id="4ONC"/>
<dbReference type="PDBsum" id="6IME"/>
<dbReference type="SMR" id="P9WFF7"/>
<dbReference type="FunCoup" id="P9WFF7">
    <property type="interactions" value="215"/>
</dbReference>
<dbReference type="STRING" id="83332.Rv2361c"/>
<dbReference type="ChEMBL" id="CHEMBL5465376"/>
<dbReference type="DrugBank" id="DB02552">
    <property type="generic name" value="Geranyl Diphosphate"/>
</dbReference>
<dbReference type="DrugBank" id="DB04714">
    <property type="generic name" value="ISOPENTENYL PYROPHOSPHATE"/>
</dbReference>
<dbReference type="PaxDb" id="83332-Rv2361c"/>
<dbReference type="DNASU" id="888964"/>
<dbReference type="GeneID" id="888964"/>
<dbReference type="KEGG" id="mtu:Rv2361c"/>
<dbReference type="KEGG" id="mtv:RVBD_2361c"/>
<dbReference type="TubercuList" id="Rv2361c"/>
<dbReference type="eggNOG" id="COG0020">
    <property type="taxonomic scope" value="Bacteria"/>
</dbReference>
<dbReference type="InParanoid" id="P9WFF7"/>
<dbReference type="OrthoDB" id="4191603at2"/>
<dbReference type="PhylomeDB" id="P9WFF7"/>
<dbReference type="BioCyc" id="MetaCyc:G185E-6587-MONOMER"/>
<dbReference type="BRENDA" id="2.5.1.86">
    <property type="organism ID" value="3445"/>
</dbReference>
<dbReference type="EvolutionaryTrace" id="P9WFF7"/>
<dbReference type="Proteomes" id="UP000001584">
    <property type="component" value="Chromosome"/>
</dbReference>
<dbReference type="GO" id="GO:0005829">
    <property type="term" value="C:cytosol"/>
    <property type="evidence" value="ECO:0000314"/>
    <property type="project" value="MTBBASE"/>
</dbReference>
<dbReference type="GO" id="GO:0005886">
    <property type="term" value="C:plasma membrane"/>
    <property type="evidence" value="ECO:0000314"/>
    <property type="project" value="MTBBASE"/>
</dbReference>
<dbReference type="GO" id="GO:0052923">
    <property type="term" value="F:all-trans-nonaprenyl-diphosphate synthase (geranyl-diphosphate specific) activity"/>
    <property type="evidence" value="ECO:0000314"/>
    <property type="project" value="MTBBASE"/>
</dbReference>
<dbReference type="GO" id="GO:0008834">
    <property type="term" value="F:ditrans,polycis-undecaprenyl-diphosphate synthase [(2E,6E)-farnesyl-diphosphate specific] activity"/>
    <property type="evidence" value="ECO:0000314"/>
    <property type="project" value="MTBBASE"/>
</dbReference>
<dbReference type="GO" id="GO:0000287">
    <property type="term" value="F:magnesium ion binding"/>
    <property type="evidence" value="ECO:0000314"/>
    <property type="project" value="MTBBASE"/>
</dbReference>
<dbReference type="GO" id="GO:0030145">
    <property type="term" value="F:manganese ion binding"/>
    <property type="evidence" value="ECO:0000314"/>
    <property type="project" value="MTBBASE"/>
</dbReference>
<dbReference type="GO" id="GO:0033850">
    <property type="term" value="F:Z-farnesyl diphosphate synthase activity"/>
    <property type="evidence" value="ECO:0000314"/>
    <property type="project" value="MTBBASE"/>
</dbReference>
<dbReference type="GO" id="GO:0016094">
    <property type="term" value="P:polyprenol biosynthetic process"/>
    <property type="evidence" value="ECO:0000314"/>
    <property type="project" value="MTBBASE"/>
</dbReference>
<dbReference type="CDD" id="cd00475">
    <property type="entry name" value="Cis_IPPS"/>
    <property type="match status" value="1"/>
</dbReference>
<dbReference type="FunFam" id="3.40.1180.10:FF:000004">
    <property type="entry name" value="Isoprenyl transferase"/>
    <property type="match status" value="1"/>
</dbReference>
<dbReference type="Gene3D" id="3.40.1180.10">
    <property type="entry name" value="Decaprenyl diphosphate synthase-like"/>
    <property type="match status" value="1"/>
</dbReference>
<dbReference type="HAMAP" id="MF_01139">
    <property type="entry name" value="ISPT"/>
    <property type="match status" value="1"/>
</dbReference>
<dbReference type="InterPro" id="IPR001441">
    <property type="entry name" value="UPP_synth-like"/>
</dbReference>
<dbReference type="InterPro" id="IPR018520">
    <property type="entry name" value="UPP_synth-like_CS"/>
</dbReference>
<dbReference type="InterPro" id="IPR036424">
    <property type="entry name" value="UPP_synth-like_sf"/>
</dbReference>
<dbReference type="NCBIfam" id="NF011402">
    <property type="entry name" value="PRK14827.1"/>
    <property type="match status" value="1"/>
</dbReference>
<dbReference type="NCBIfam" id="NF011404">
    <property type="entry name" value="PRK14829.1"/>
    <property type="match status" value="1"/>
</dbReference>
<dbReference type="NCBIfam" id="TIGR00055">
    <property type="entry name" value="uppS"/>
    <property type="match status" value="1"/>
</dbReference>
<dbReference type="PANTHER" id="PTHR10291:SF0">
    <property type="entry name" value="DEHYDRODOLICHYL DIPHOSPHATE SYNTHASE 2"/>
    <property type="match status" value="1"/>
</dbReference>
<dbReference type="PANTHER" id="PTHR10291">
    <property type="entry name" value="DEHYDRODOLICHYL DIPHOSPHATE SYNTHASE FAMILY MEMBER"/>
    <property type="match status" value="1"/>
</dbReference>
<dbReference type="Pfam" id="PF01255">
    <property type="entry name" value="Prenyltransf"/>
    <property type="match status" value="1"/>
</dbReference>
<dbReference type="SUPFAM" id="SSF64005">
    <property type="entry name" value="Undecaprenyl diphosphate synthase"/>
    <property type="match status" value="1"/>
</dbReference>
<dbReference type="PROSITE" id="PS01066">
    <property type="entry name" value="UPP_SYNTHASE"/>
    <property type="match status" value="1"/>
</dbReference>
<evidence type="ECO:0000250" key="1"/>
<evidence type="ECO:0000256" key="2">
    <source>
        <dbReference type="SAM" id="MobiDB-lite"/>
    </source>
</evidence>
<evidence type="ECO:0000269" key="3">
    <source>
    </source>
</evidence>
<evidence type="ECO:0000269" key="4">
    <source>
    </source>
</evidence>
<evidence type="ECO:0000269" key="5">
    <source>
    </source>
</evidence>
<evidence type="ECO:0000269" key="6">
    <source>
    </source>
</evidence>
<evidence type="ECO:0000305" key="7"/>
<evidence type="ECO:0007829" key="8">
    <source>
        <dbReference type="PDB" id="2VG3"/>
    </source>
</evidence>
<evidence type="ECO:0007829" key="9">
    <source>
        <dbReference type="PDB" id="6IME"/>
    </source>
</evidence>
<accession>P9WFF7</accession>
<accession>L0T9E4</accession>
<accession>O05837</accession>
<accession>P60479</accession>
<keyword id="KW-0002">3D-structure</keyword>
<keyword id="KW-1003">Cell membrane</keyword>
<keyword id="KW-0460">Magnesium</keyword>
<keyword id="KW-0472">Membrane</keyword>
<keyword id="KW-0479">Metal-binding</keyword>
<keyword id="KW-1185">Reference proteome</keyword>
<keyword id="KW-0808">Transferase</keyword>
<gene>
    <name type="primary">uppS</name>
    <name type="ordered locus">Rv2361c</name>
    <name type="ORF">MTCY27.19</name>
</gene>
<feature type="chain" id="PRO_0000123641" description="Decaprenyl diphosphate synthase">
    <location>
        <begin position="1"/>
        <end position="296"/>
    </location>
</feature>
<feature type="region of interest" description="Disordered" evidence="2">
    <location>
        <begin position="1"/>
        <end position="24"/>
    </location>
</feature>
<feature type="active site" evidence="1">
    <location>
        <position position="76"/>
    </location>
</feature>
<feature type="active site" description="Proton acceptor">
    <location>
        <position position="124"/>
    </location>
</feature>
<feature type="binding site">
    <location>
        <begin position="76"/>
        <end position="80"/>
    </location>
    <ligand>
        <name>substrate</name>
    </ligand>
</feature>
<feature type="binding site" evidence="1">
    <location>
        <position position="76"/>
    </location>
    <ligand>
        <name>Mg(2+)</name>
        <dbReference type="ChEBI" id="CHEBI:18420"/>
    </ligand>
</feature>
<feature type="binding site" evidence="1">
    <location>
        <position position="81"/>
    </location>
    <ligand>
        <name>substrate</name>
    </ligand>
</feature>
<feature type="binding site">
    <location>
        <position position="89"/>
    </location>
    <ligand>
        <name>substrate</name>
    </ligand>
</feature>
<feature type="binding site" evidence="1">
    <location>
        <position position="93"/>
    </location>
    <ligand>
        <name>substrate</name>
    </ligand>
</feature>
<feature type="binding site">
    <location>
        <begin position="121"/>
        <end position="124"/>
    </location>
    <ligand>
        <name>substrate</name>
    </ligand>
</feature>
<feature type="binding site" evidence="1">
    <location>
        <position position="125"/>
    </location>
    <ligand>
        <name>substrate</name>
    </ligand>
</feature>
<feature type="binding site">
    <location>
        <position position="127"/>
    </location>
    <ligand>
        <name>substrate</name>
    </ligand>
</feature>
<feature type="binding site">
    <location>
        <position position="168"/>
    </location>
    <ligand>
        <name>substrate</name>
    </ligand>
</feature>
<feature type="binding site">
    <location>
        <position position="244"/>
    </location>
    <ligand>
        <name>substrate</name>
    </ligand>
</feature>
<feature type="binding site">
    <location>
        <begin position="250"/>
        <end position="252"/>
    </location>
    <ligand>
        <name>substrate</name>
    </ligand>
</feature>
<feature type="binding site" evidence="1">
    <location>
        <position position="263"/>
    </location>
    <ligand>
        <name>Mg(2+)</name>
        <dbReference type="ChEBI" id="CHEBI:18420"/>
    </ligand>
</feature>
<feature type="binding site">
    <location>
        <begin position="292"/>
        <end position="294"/>
    </location>
    <ligand>
        <name>substrate</name>
    </ligand>
</feature>
<feature type="strand" evidence="9">
    <location>
        <begin position="31"/>
        <end position="33"/>
    </location>
</feature>
<feature type="strand" evidence="8">
    <location>
        <begin position="43"/>
        <end position="46"/>
    </location>
</feature>
<feature type="helix" evidence="9">
    <location>
        <begin position="64"/>
        <end position="66"/>
    </location>
</feature>
<feature type="strand" evidence="9">
    <location>
        <begin position="69"/>
        <end position="74"/>
    </location>
</feature>
<feature type="helix" evidence="9">
    <location>
        <begin position="78"/>
        <end position="84"/>
    </location>
</feature>
<feature type="helix" evidence="9">
    <location>
        <begin position="89"/>
        <end position="110"/>
    </location>
</feature>
<feature type="strand" evidence="9">
    <location>
        <begin position="114"/>
        <end position="121"/>
    </location>
</feature>
<feature type="helix" evidence="9">
    <location>
        <begin position="122"/>
        <end position="126"/>
    </location>
</feature>
<feature type="helix" evidence="9">
    <location>
        <begin position="129"/>
        <end position="152"/>
    </location>
</feature>
<feature type="strand" evidence="9">
    <location>
        <begin position="155"/>
        <end position="161"/>
    </location>
</feature>
<feature type="helix" evidence="9">
    <location>
        <begin position="168"/>
        <end position="181"/>
    </location>
</feature>
<feature type="strand" evidence="9">
    <location>
        <begin position="186"/>
        <end position="195"/>
    </location>
</feature>
<feature type="helix" evidence="9">
    <location>
        <begin position="197"/>
        <end position="213"/>
    </location>
</feature>
<feature type="helix" evidence="9">
    <location>
        <begin position="219"/>
        <end position="221"/>
    </location>
</feature>
<feature type="helix" evidence="9">
    <location>
        <begin position="224"/>
        <end position="230"/>
    </location>
</feature>
<feature type="strand" evidence="9">
    <location>
        <begin position="231"/>
        <end position="233"/>
    </location>
</feature>
<feature type="strand" evidence="9">
    <location>
        <begin position="240"/>
        <end position="244"/>
    </location>
</feature>
<feature type="turn" evidence="9">
    <location>
        <begin position="252"/>
        <end position="261"/>
    </location>
</feature>
<feature type="strand" evidence="9">
    <location>
        <begin position="263"/>
        <end position="266"/>
    </location>
</feature>
<feature type="helix" evidence="9">
    <location>
        <begin position="271"/>
        <end position="273"/>
    </location>
</feature>
<feature type="helix" evidence="9">
    <location>
        <begin position="276"/>
        <end position="288"/>
    </location>
</feature>
<sequence length="296" mass="33791">MARDARKRTSSNFPQLPPAPDDYPTFPDTSTWPVVFPELPAAPYGGPCRPPQHTSKAAAPRIPADRLPNHVAIVMDGNGRWATQRGLARTEGHKMGEAVVIDIACGAIELGIKWLSLYAFSTENWKRSPEEVRFLMGFNRDVVRRRRDTLKKLGVRIRWVGSRPRLWRSVINELAVAEEMTKSNDVITINYCVNYGGRTEITEATREIAREVAAGRLNPERITESTIARHLQRPDIPDVDLFLRTSGEQRSSNFMLWQAAYAEYIFQDKLWPDYDRRDLWAACEEYASRTRRFGSA</sequence>
<reference key="1">
    <citation type="journal article" date="1998" name="Nature">
        <title>Deciphering the biology of Mycobacterium tuberculosis from the complete genome sequence.</title>
        <authorList>
            <person name="Cole S.T."/>
            <person name="Brosch R."/>
            <person name="Parkhill J."/>
            <person name="Garnier T."/>
            <person name="Churcher C.M."/>
            <person name="Harris D.E."/>
            <person name="Gordon S.V."/>
            <person name="Eiglmeier K."/>
            <person name="Gas S."/>
            <person name="Barry C.E. III"/>
            <person name="Tekaia F."/>
            <person name="Badcock K."/>
            <person name="Basham D."/>
            <person name="Brown D."/>
            <person name="Chillingworth T."/>
            <person name="Connor R."/>
            <person name="Davies R.M."/>
            <person name="Devlin K."/>
            <person name="Feltwell T."/>
            <person name="Gentles S."/>
            <person name="Hamlin N."/>
            <person name="Holroyd S."/>
            <person name="Hornsby T."/>
            <person name="Jagels K."/>
            <person name="Krogh A."/>
            <person name="McLean J."/>
            <person name="Moule S."/>
            <person name="Murphy L.D."/>
            <person name="Oliver S."/>
            <person name="Osborne J."/>
            <person name="Quail M.A."/>
            <person name="Rajandream M.A."/>
            <person name="Rogers J."/>
            <person name="Rutter S."/>
            <person name="Seeger K."/>
            <person name="Skelton S."/>
            <person name="Squares S."/>
            <person name="Squares R."/>
            <person name="Sulston J.E."/>
            <person name="Taylor K."/>
            <person name="Whitehead S."/>
            <person name="Barrell B.G."/>
        </authorList>
    </citation>
    <scope>NUCLEOTIDE SEQUENCE [LARGE SCALE GENOMIC DNA]</scope>
    <source>
        <strain>ATCC 25618 / H37Rv</strain>
    </source>
</reference>
<reference key="2">
    <citation type="journal article" date="2000" name="J. Bacteriol.">
        <title>Polyprenyl phosphate biosynthesis in Mycobacterium tuberculosis and Mycobacterium smegmatis.</title>
        <authorList>
            <person name="Crick D.C."/>
            <person name="Schulbach M.C."/>
            <person name="Zink E.E."/>
            <person name="Macchia M."/>
            <person name="Barontini S."/>
            <person name="Besra G.S."/>
            <person name="Brennan P.J."/>
        </authorList>
    </citation>
    <scope>FUNCTION AS A DECAPRENYL DIPHOSPHATE SYNTHASE</scope>
    <scope>CATALYTIC ACTIVITY</scope>
    <scope>SUBSTRATE SPECIFICITY</scope>
    <scope>SUBCELLULAR LOCATION</scope>
</reference>
<reference key="3">
    <citation type="journal article" date="2000" name="J. Biol. Chem.">
        <title>Identification of a short (C15) chain Z-isoprenyl diphosphate synthase and a homologous long (C50) chain isoprenyl diphosphate synthase in Mycobacterium tuberculosis.</title>
        <authorList>
            <person name="Schulbach M.C."/>
            <person name="Brennan P.J."/>
            <person name="Crick D.C."/>
        </authorList>
    </citation>
    <scope>FUNCTION AS A DECAPRENYL DIPHOSPHATE SYNTHASE</scope>
    <scope>SUBSTRATE SPECIFICITY</scope>
    <scope>SUBCELLULAR LOCATION</scope>
</reference>
<reference key="4">
    <citation type="journal article" date="2004" name="J. Bacteriol.">
        <title>Decaprenyl diphosphate synthesis in Mycobacterium tuberculosis.</title>
        <authorList>
            <person name="Kaur D."/>
            <person name="Brennan P.J."/>
            <person name="Crick D.C."/>
        </authorList>
    </citation>
    <scope>FUNCTION AS A DECAPRENYL DIPHOSPHATE SYNTHASE</scope>
    <scope>CATALYTIC ACTIVITY</scope>
    <scope>ACTIVITY REGULATION</scope>
    <scope>COFACTOR</scope>
    <scope>SUBSTRATE SPECIFICITY</scope>
    <scope>BIOPHYSICOCHEMICAL PROPERTIES</scope>
</reference>
<reference key="5">
    <citation type="journal article" date="2011" name="Mol. Cell. Proteomics">
        <title>Proteogenomic analysis of Mycobacterium tuberculosis by high resolution mass spectrometry.</title>
        <authorList>
            <person name="Kelkar D.S."/>
            <person name="Kumar D."/>
            <person name="Kumar P."/>
            <person name="Balakrishnan L."/>
            <person name="Muthusamy B."/>
            <person name="Yadav A.K."/>
            <person name="Shrivastava P."/>
            <person name="Marimuthu A."/>
            <person name="Anand S."/>
            <person name="Sundaram H."/>
            <person name="Kingsbury R."/>
            <person name="Harsha H.C."/>
            <person name="Nair B."/>
            <person name="Prasad T.S."/>
            <person name="Chauhan D.S."/>
            <person name="Katoch K."/>
            <person name="Katoch V.M."/>
            <person name="Kumar P."/>
            <person name="Chaerkady R."/>
            <person name="Ramachandran S."/>
            <person name="Dash D."/>
            <person name="Pandey A."/>
        </authorList>
    </citation>
    <scope>IDENTIFICATION BY MASS SPECTROMETRY [LARGE SCALE ANALYSIS]</scope>
    <source>
        <strain>ATCC 25618 / H37Rv</strain>
    </source>
</reference>
<reference key="6">
    <citation type="journal article" date="2008" name="J. Mol. Biol.">
        <title>The structural basis of chain length control in Rv1086.</title>
        <authorList>
            <person name="Wang W."/>
            <person name="Dong C."/>
            <person name="McNeil M."/>
            <person name="Kaur D."/>
            <person name="Mahapatra S."/>
            <person name="Crick D.C."/>
            <person name="Naismith J.H."/>
        </authorList>
    </citation>
    <scope>X-RAY CRYSTALLOGRAPHY (1.80 ANGSTROMS) OF 13-296 IN COMPLEX WITH SUBSTRATE ANALOGS</scope>
    <scope>COFACTOR</scope>
    <scope>SUBUNIT</scope>
</reference>
<comment type="function">
    <text evidence="3 4 5">Catalyzes the sequential condensation of isopentenyl diphosphate (IPP) in the cis configuration with (2Z,6E)-farnesyl diphosphate (Z-FPP or EZ-FPP) generating the 50 carbon product trans,polycis-decaprenyl diphosphate. When (2E,6E)-farnesyl diphosphate (E-FPP or EE-FPP) is used in vitro, both primary products decaprenyl diphosphate and (2E,6E,10E)-geranylgeranyl diphosphate (EEE-GGPP) are synthesized. M.tuberculosis does not synthesize (2E,6E,10Z)-geranylgeranyl diphosphate (EEZ-GGPP) and heptaprenyl diphosphate. Can also accept many different allylic substrates, including E-geranyl diphosphate (E-GPP), neryl diphosphate (NPP), and all-trans-geranyl-geranyl diphosphate.</text>
</comment>
<comment type="catalytic activity">
    <reaction>
        <text>(2Z,6E)-farnesyl diphosphate + 7 isopentenyl diphosphate = (2Z,6Z,10Z,14Z,18Z,22Z,26Z,30Z,34E)-decaprenyl diphosphate + 7 diphosphate</text>
        <dbReference type="Rhea" id="RHEA:47096"/>
        <dbReference type="ChEBI" id="CHEBI:33019"/>
        <dbReference type="ChEBI" id="CHEBI:87356"/>
        <dbReference type="ChEBI" id="CHEBI:128769"/>
        <dbReference type="ChEBI" id="CHEBI:162247"/>
        <dbReference type="EC" id="2.5.1.86"/>
    </reaction>
</comment>
<comment type="catalytic activity">
    <reaction>
        <text>n isopentenyl diphosphate + (2E,6E)-farnesyl diphosphate = a di-trans,poly-cis-polyprenyl diphosphate + n diphosphate</text>
        <dbReference type="Rhea" id="RHEA:53008"/>
        <dbReference type="Rhea" id="RHEA-COMP:19494"/>
        <dbReference type="ChEBI" id="CHEBI:33019"/>
        <dbReference type="ChEBI" id="CHEBI:128769"/>
        <dbReference type="ChEBI" id="CHEBI:136960"/>
        <dbReference type="ChEBI" id="CHEBI:175763"/>
        <dbReference type="EC" id="2.5.1.87"/>
    </reaction>
</comment>
<comment type="cofactor">
    <cofactor evidence="5 6">
        <name>Mg(2+)</name>
        <dbReference type="ChEBI" id="CHEBI:18420"/>
    </cofactor>
    <cofactor evidence="5 6">
        <name>Mn(2+)</name>
        <dbReference type="ChEBI" id="CHEBI:29035"/>
    </cofactor>
    <text evidence="5 6">Binds 2 magnesium ions per subunit. Can also use manganese as divalent cation, however calcium and zinc ions are much less effective.</text>
</comment>
<comment type="activity regulation">
    <text evidence="5">Activated by dithiothreitol and inhibited by EDTA.</text>
</comment>
<comment type="biophysicochemical properties">
    <kinetics>
        <KM evidence="5">29 uM for NPP (at pH 7.9 and 37 degrees Celsius)</KM>
        <KM evidence="5">40 uM for EEE-GGPP (at pH 7.9 and 37 degrees Celsius)</KM>
        <KM evidence="5">84 uM for EE-FPP (at pH 7.9 and 37 degrees Celsius)</KM>
        <KM evidence="5">89 uM for IPP (at pH 7.9 and 37 degrees Celsius)</KM>
        <KM evidence="5">290 uM for EZ-FPP (at pH 7.9 and 37 degrees Celsius)</KM>
        <KM evidence="5">490 uM for E-GPP (at pH 7.9 and 37 degrees Celsius)</KM>
        <Vmax evidence="5">12.0 pmol/min/mg enzyme with EEE-GGPP as substrate (at pH 7.9 and 37 degrees Celsius)</Vmax>
        <Vmax evidence="5">21.0 pmol/min/mg enzyme with NPP as substrate (at pH 7.9 and 37 degrees Celsius)</Vmax>
        <Vmax evidence="5">25.0 pmol/min/mg enzyme with E-GPP as substrate (at pH 7.9 and 37 degrees Celsius)</Vmax>
        <Vmax evidence="5">30.0 pmol/min/mg enzyme with EE-FPP as substrate (at pH 7.9 and 37 degrees Celsius)</Vmax>
        <Vmax evidence="5">4800.0 pmol/min/mg enzyme with EZ-FPP as substrate (at pH 7.9 and 37 degrees Celsius)</Vmax>
    </kinetics>
    <phDependence>
        <text evidence="5">Optimum pH is between 7.5 and 8.5.</text>
    </phDependence>
</comment>
<comment type="subunit">
    <text evidence="6">Homodimer.</text>
</comment>
<comment type="subcellular location">
    <subcellularLocation>
        <location evidence="3 4">Cell membrane</location>
    </subcellularLocation>
</comment>
<comment type="similarity">
    <text evidence="7">Belongs to the UPP synthase family.</text>
</comment>
<proteinExistence type="evidence at protein level"/>
<name>DPDS_MYCTU</name>